<protein>
    <recommendedName>
        <fullName evidence="1">Glutamate racemase</fullName>
        <ecNumber evidence="1">5.1.1.3</ecNumber>
    </recommendedName>
</protein>
<gene>
    <name evidence="1" type="primary">murI</name>
    <name type="ordered locus">SAK_1615</name>
</gene>
<evidence type="ECO:0000255" key="1">
    <source>
        <dbReference type="HAMAP-Rule" id="MF_00258"/>
    </source>
</evidence>
<feature type="chain" id="PRO_1000047620" description="Glutamate racemase">
    <location>
        <begin position="1"/>
        <end position="264"/>
    </location>
</feature>
<feature type="active site" description="Proton donor/acceptor" evidence="1">
    <location>
        <position position="73"/>
    </location>
</feature>
<feature type="active site" description="Proton donor/acceptor" evidence="1">
    <location>
        <position position="183"/>
    </location>
</feature>
<feature type="binding site" evidence="1">
    <location>
        <begin position="10"/>
        <end position="11"/>
    </location>
    <ligand>
        <name>substrate</name>
    </ligand>
</feature>
<feature type="binding site" evidence="1">
    <location>
        <begin position="42"/>
        <end position="43"/>
    </location>
    <ligand>
        <name>substrate</name>
    </ligand>
</feature>
<feature type="binding site" evidence="1">
    <location>
        <begin position="74"/>
        <end position="75"/>
    </location>
    <ligand>
        <name>substrate</name>
    </ligand>
</feature>
<feature type="binding site" evidence="1">
    <location>
        <begin position="184"/>
        <end position="185"/>
    </location>
    <ligand>
        <name>substrate</name>
    </ligand>
</feature>
<proteinExistence type="inferred from homology"/>
<keyword id="KW-0133">Cell shape</keyword>
<keyword id="KW-0961">Cell wall biogenesis/degradation</keyword>
<keyword id="KW-0413">Isomerase</keyword>
<keyword id="KW-0573">Peptidoglycan synthesis</keyword>
<sequence length="264" mass="29127">MDSRPIGFLDSGVGGLTVVKEMFRQLPEEEVIFIGDQARAPYGPRPAQQIREFTWQMVNFLLTKNVKMIVIACNTATAVAWQEIKEKLDIPVLGVILPGASAAIKSTNLGKVGIIGTPMTVKSDAYRQKIQALSPNTAVVSLACPKFVPIVESNQMSSSLAKKVVYETLSPLVGKLDTLILGCTHYPLLRPIIQNVMGAEVKLIDSGAETVRDISVLLNYFEINHNWQNKHGGHHFYTTASPKGFKEIAEQWLSQEINVERIVL</sequence>
<accession>Q3JZT5</accession>
<organism>
    <name type="scientific">Streptococcus agalactiae serotype Ia (strain ATCC 27591 / A909 / CDC SS700)</name>
    <dbReference type="NCBI Taxonomy" id="205921"/>
    <lineage>
        <taxon>Bacteria</taxon>
        <taxon>Bacillati</taxon>
        <taxon>Bacillota</taxon>
        <taxon>Bacilli</taxon>
        <taxon>Lactobacillales</taxon>
        <taxon>Streptococcaceae</taxon>
        <taxon>Streptococcus</taxon>
    </lineage>
</organism>
<name>MURI_STRA1</name>
<reference key="1">
    <citation type="journal article" date="2005" name="Proc. Natl. Acad. Sci. U.S.A.">
        <title>Genome analysis of multiple pathogenic isolates of Streptococcus agalactiae: implications for the microbial 'pan-genome'.</title>
        <authorList>
            <person name="Tettelin H."/>
            <person name="Masignani V."/>
            <person name="Cieslewicz M.J."/>
            <person name="Donati C."/>
            <person name="Medini D."/>
            <person name="Ward N.L."/>
            <person name="Angiuoli S.V."/>
            <person name="Crabtree J."/>
            <person name="Jones A.L."/>
            <person name="Durkin A.S."/>
            <person name="DeBoy R.T."/>
            <person name="Davidsen T.M."/>
            <person name="Mora M."/>
            <person name="Scarselli M."/>
            <person name="Margarit y Ros I."/>
            <person name="Peterson J.D."/>
            <person name="Hauser C.R."/>
            <person name="Sundaram J.P."/>
            <person name="Nelson W.C."/>
            <person name="Madupu R."/>
            <person name="Brinkac L.M."/>
            <person name="Dodson R.J."/>
            <person name="Rosovitz M.J."/>
            <person name="Sullivan S.A."/>
            <person name="Daugherty S.C."/>
            <person name="Haft D.H."/>
            <person name="Selengut J."/>
            <person name="Gwinn M.L."/>
            <person name="Zhou L."/>
            <person name="Zafar N."/>
            <person name="Khouri H."/>
            <person name="Radune D."/>
            <person name="Dimitrov G."/>
            <person name="Watkins K."/>
            <person name="O'Connor K.J."/>
            <person name="Smith S."/>
            <person name="Utterback T.R."/>
            <person name="White O."/>
            <person name="Rubens C.E."/>
            <person name="Grandi G."/>
            <person name="Madoff L.C."/>
            <person name="Kasper D.L."/>
            <person name="Telford J.L."/>
            <person name="Wessels M.R."/>
            <person name="Rappuoli R."/>
            <person name="Fraser C.M."/>
        </authorList>
    </citation>
    <scope>NUCLEOTIDE SEQUENCE [LARGE SCALE GENOMIC DNA]</scope>
    <source>
        <strain>ATCC 27591 / A909 / CDC SS700</strain>
    </source>
</reference>
<comment type="function">
    <text evidence="1">Provides the (R)-glutamate required for cell wall biosynthesis.</text>
</comment>
<comment type="catalytic activity">
    <reaction evidence="1">
        <text>L-glutamate = D-glutamate</text>
        <dbReference type="Rhea" id="RHEA:12813"/>
        <dbReference type="ChEBI" id="CHEBI:29985"/>
        <dbReference type="ChEBI" id="CHEBI:29986"/>
        <dbReference type="EC" id="5.1.1.3"/>
    </reaction>
</comment>
<comment type="pathway">
    <text evidence="1">Cell wall biogenesis; peptidoglycan biosynthesis.</text>
</comment>
<comment type="similarity">
    <text evidence="1">Belongs to the aspartate/glutamate racemases family.</text>
</comment>
<dbReference type="EC" id="5.1.1.3" evidence="1"/>
<dbReference type="EMBL" id="CP000114">
    <property type="protein sequence ID" value="ABA45068.1"/>
    <property type="molecule type" value="Genomic_DNA"/>
</dbReference>
<dbReference type="SMR" id="Q3JZT5"/>
<dbReference type="KEGG" id="sak:SAK_1615"/>
<dbReference type="HOGENOM" id="CLU_052344_0_2_9"/>
<dbReference type="UniPathway" id="UPA00219"/>
<dbReference type="GO" id="GO:0008881">
    <property type="term" value="F:glutamate racemase activity"/>
    <property type="evidence" value="ECO:0007669"/>
    <property type="project" value="UniProtKB-UniRule"/>
</dbReference>
<dbReference type="GO" id="GO:0071555">
    <property type="term" value="P:cell wall organization"/>
    <property type="evidence" value="ECO:0007669"/>
    <property type="project" value="UniProtKB-KW"/>
</dbReference>
<dbReference type="GO" id="GO:0009252">
    <property type="term" value="P:peptidoglycan biosynthetic process"/>
    <property type="evidence" value="ECO:0007669"/>
    <property type="project" value="UniProtKB-UniRule"/>
</dbReference>
<dbReference type="GO" id="GO:0008360">
    <property type="term" value="P:regulation of cell shape"/>
    <property type="evidence" value="ECO:0007669"/>
    <property type="project" value="UniProtKB-KW"/>
</dbReference>
<dbReference type="FunFam" id="3.40.50.1860:FF:000002">
    <property type="entry name" value="Glutamate racemase"/>
    <property type="match status" value="1"/>
</dbReference>
<dbReference type="Gene3D" id="3.40.50.1860">
    <property type="match status" value="2"/>
</dbReference>
<dbReference type="HAMAP" id="MF_00258">
    <property type="entry name" value="Glu_racemase"/>
    <property type="match status" value="1"/>
</dbReference>
<dbReference type="InterPro" id="IPR015942">
    <property type="entry name" value="Asp/Glu/hydantoin_racemase"/>
</dbReference>
<dbReference type="InterPro" id="IPR001920">
    <property type="entry name" value="Asp/Glu_race"/>
</dbReference>
<dbReference type="InterPro" id="IPR018187">
    <property type="entry name" value="Asp/Glu_racemase_AS_1"/>
</dbReference>
<dbReference type="InterPro" id="IPR033134">
    <property type="entry name" value="Asp/Glu_racemase_AS_2"/>
</dbReference>
<dbReference type="InterPro" id="IPR004391">
    <property type="entry name" value="Glu_race"/>
</dbReference>
<dbReference type="NCBIfam" id="TIGR00067">
    <property type="entry name" value="glut_race"/>
    <property type="match status" value="1"/>
</dbReference>
<dbReference type="NCBIfam" id="NF002035">
    <property type="entry name" value="PRK00865.1-3"/>
    <property type="match status" value="1"/>
</dbReference>
<dbReference type="PANTHER" id="PTHR21198">
    <property type="entry name" value="GLUTAMATE RACEMASE"/>
    <property type="match status" value="1"/>
</dbReference>
<dbReference type="PANTHER" id="PTHR21198:SF2">
    <property type="entry name" value="GLUTAMATE RACEMASE"/>
    <property type="match status" value="1"/>
</dbReference>
<dbReference type="Pfam" id="PF01177">
    <property type="entry name" value="Asp_Glu_race"/>
    <property type="match status" value="1"/>
</dbReference>
<dbReference type="SUPFAM" id="SSF53681">
    <property type="entry name" value="Aspartate/glutamate racemase"/>
    <property type="match status" value="2"/>
</dbReference>
<dbReference type="PROSITE" id="PS00923">
    <property type="entry name" value="ASP_GLU_RACEMASE_1"/>
    <property type="match status" value="1"/>
</dbReference>
<dbReference type="PROSITE" id="PS00924">
    <property type="entry name" value="ASP_GLU_RACEMASE_2"/>
    <property type="match status" value="1"/>
</dbReference>